<keyword id="KW-0028">Amino-acid biosynthesis</keyword>
<keyword id="KW-0055">Arginine biosynthesis</keyword>
<keyword id="KW-0963">Cytoplasm</keyword>
<keyword id="KW-0456">Lyase</keyword>
<name>ARLY_BACP2</name>
<proteinExistence type="inferred from homology"/>
<protein>
    <recommendedName>
        <fullName evidence="1">Argininosuccinate lyase</fullName>
        <shortName evidence="1">ASAL</shortName>
        <ecNumber evidence="1">4.3.2.1</ecNumber>
    </recommendedName>
    <alternativeName>
        <fullName evidence="1">Arginosuccinase</fullName>
    </alternativeName>
</protein>
<evidence type="ECO:0000255" key="1">
    <source>
        <dbReference type="HAMAP-Rule" id="MF_00006"/>
    </source>
</evidence>
<comment type="catalytic activity">
    <reaction evidence="1">
        <text>2-(N(omega)-L-arginino)succinate = fumarate + L-arginine</text>
        <dbReference type="Rhea" id="RHEA:24020"/>
        <dbReference type="ChEBI" id="CHEBI:29806"/>
        <dbReference type="ChEBI" id="CHEBI:32682"/>
        <dbReference type="ChEBI" id="CHEBI:57472"/>
        <dbReference type="EC" id="4.3.2.1"/>
    </reaction>
</comment>
<comment type="pathway">
    <text evidence="1">Amino-acid biosynthesis; L-arginine biosynthesis; L-arginine from L-ornithine and carbamoyl phosphate: step 3/3.</text>
</comment>
<comment type="subcellular location">
    <subcellularLocation>
        <location evidence="1">Cytoplasm</location>
    </subcellularLocation>
</comment>
<comment type="similarity">
    <text evidence="1">Belongs to the lyase 1 family. Argininosuccinate lyase subfamily.</text>
</comment>
<organism>
    <name type="scientific">Bacillus pumilus (strain SAFR-032)</name>
    <dbReference type="NCBI Taxonomy" id="315750"/>
    <lineage>
        <taxon>Bacteria</taxon>
        <taxon>Bacillati</taxon>
        <taxon>Bacillota</taxon>
        <taxon>Bacilli</taxon>
        <taxon>Bacillales</taxon>
        <taxon>Bacillaceae</taxon>
        <taxon>Bacillus</taxon>
    </lineage>
</organism>
<gene>
    <name evidence="1" type="primary">argH</name>
    <name type="ordered locus">BPUM_2576</name>
</gene>
<accession>A8FG69</accession>
<reference key="1">
    <citation type="journal article" date="2007" name="PLoS ONE">
        <title>Paradoxical DNA repair and peroxide resistance gene conservation in Bacillus pumilus SAFR-032.</title>
        <authorList>
            <person name="Gioia J."/>
            <person name="Yerrapragada S."/>
            <person name="Qin X."/>
            <person name="Jiang H."/>
            <person name="Igboeli O.C."/>
            <person name="Muzny D."/>
            <person name="Dugan-Rocha S."/>
            <person name="Ding Y."/>
            <person name="Hawes A."/>
            <person name="Liu W."/>
            <person name="Perez L."/>
            <person name="Kovar C."/>
            <person name="Dinh H."/>
            <person name="Lee S."/>
            <person name="Nazareth L."/>
            <person name="Blyth P."/>
            <person name="Holder M."/>
            <person name="Buhay C."/>
            <person name="Tirumalai M.R."/>
            <person name="Liu Y."/>
            <person name="Dasgupta I."/>
            <person name="Bokhetache L."/>
            <person name="Fujita M."/>
            <person name="Karouia F."/>
            <person name="Eswara Moorthy P."/>
            <person name="Siefert J."/>
            <person name="Uzman A."/>
            <person name="Buzumbo P."/>
            <person name="Verma A."/>
            <person name="Zwiya H."/>
            <person name="McWilliams B.D."/>
            <person name="Olowu A."/>
            <person name="Clinkenbeard K.D."/>
            <person name="Newcombe D."/>
            <person name="Golebiewski L."/>
            <person name="Petrosino J.F."/>
            <person name="Nicholson W.L."/>
            <person name="Fox G.E."/>
            <person name="Venkateswaran K."/>
            <person name="Highlander S.K."/>
            <person name="Weinstock G.M."/>
        </authorList>
    </citation>
    <scope>NUCLEOTIDE SEQUENCE [LARGE SCALE GENOMIC DNA]</scope>
    <source>
        <strain>SAFR-032</strain>
    </source>
</reference>
<dbReference type="EC" id="4.3.2.1" evidence="1"/>
<dbReference type="EMBL" id="CP000813">
    <property type="protein sequence ID" value="ABV63236.1"/>
    <property type="molecule type" value="Genomic_DNA"/>
</dbReference>
<dbReference type="RefSeq" id="WP_012010876.1">
    <property type="nucleotide sequence ID" value="NC_009848.4"/>
</dbReference>
<dbReference type="SMR" id="A8FG69"/>
<dbReference type="STRING" id="315750.BPUM_2576"/>
<dbReference type="GeneID" id="5621841"/>
<dbReference type="KEGG" id="bpu:BPUM_2576"/>
<dbReference type="eggNOG" id="COG0165">
    <property type="taxonomic scope" value="Bacteria"/>
</dbReference>
<dbReference type="HOGENOM" id="CLU_027272_2_3_9"/>
<dbReference type="OrthoDB" id="9769623at2"/>
<dbReference type="UniPathway" id="UPA00068">
    <property type="reaction ID" value="UER00114"/>
</dbReference>
<dbReference type="Proteomes" id="UP000001355">
    <property type="component" value="Chromosome"/>
</dbReference>
<dbReference type="GO" id="GO:0005829">
    <property type="term" value="C:cytosol"/>
    <property type="evidence" value="ECO:0007669"/>
    <property type="project" value="TreeGrafter"/>
</dbReference>
<dbReference type="GO" id="GO:0004056">
    <property type="term" value="F:argininosuccinate lyase activity"/>
    <property type="evidence" value="ECO:0007669"/>
    <property type="project" value="UniProtKB-UniRule"/>
</dbReference>
<dbReference type="GO" id="GO:0042450">
    <property type="term" value="P:arginine biosynthetic process via ornithine"/>
    <property type="evidence" value="ECO:0007669"/>
    <property type="project" value="InterPro"/>
</dbReference>
<dbReference type="GO" id="GO:0006526">
    <property type="term" value="P:L-arginine biosynthetic process"/>
    <property type="evidence" value="ECO:0007669"/>
    <property type="project" value="UniProtKB-UniRule"/>
</dbReference>
<dbReference type="CDD" id="cd01359">
    <property type="entry name" value="Argininosuccinate_lyase"/>
    <property type="match status" value="1"/>
</dbReference>
<dbReference type="FunFam" id="1.10.275.10:FF:000002">
    <property type="entry name" value="Argininosuccinate lyase"/>
    <property type="match status" value="1"/>
</dbReference>
<dbReference type="FunFam" id="1.10.40.30:FF:000001">
    <property type="entry name" value="Argininosuccinate lyase"/>
    <property type="match status" value="1"/>
</dbReference>
<dbReference type="FunFam" id="1.20.200.10:FF:000002">
    <property type="entry name" value="Argininosuccinate lyase"/>
    <property type="match status" value="1"/>
</dbReference>
<dbReference type="Gene3D" id="1.10.40.30">
    <property type="entry name" value="Fumarase/aspartase (C-terminal domain)"/>
    <property type="match status" value="1"/>
</dbReference>
<dbReference type="Gene3D" id="1.20.200.10">
    <property type="entry name" value="Fumarase/aspartase (Central domain)"/>
    <property type="match status" value="1"/>
</dbReference>
<dbReference type="Gene3D" id="1.10.275.10">
    <property type="entry name" value="Fumarase/aspartase (N-terminal domain)"/>
    <property type="match status" value="1"/>
</dbReference>
<dbReference type="HAMAP" id="MF_00006">
    <property type="entry name" value="Arg_succ_lyase"/>
    <property type="match status" value="1"/>
</dbReference>
<dbReference type="InterPro" id="IPR029419">
    <property type="entry name" value="Arg_succ_lyase_C"/>
</dbReference>
<dbReference type="InterPro" id="IPR009049">
    <property type="entry name" value="Argininosuccinate_lyase"/>
</dbReference>
<dbReference type="InterPro" id="IPR024083">
    <property type="entry name" value="Fumarase/histidase_N"/>
</dbReference>
<dbReference type="InterPro" id="IPR020557">
    <property type="entry name" value="Fumarate_lyase_CS"/>
</dbReference>
<dbReference type="InterPro" id="IPR000362">
    <property type="entry name" value="Fumarate_lyase_fam"/>
</dbReference>
<dbReference type="InterPro" id="IPR022761">
    <property type="entry name" value="Fumarate_lyase_N"/>
</dbReference>
<dbReference type="InterPro" id="IPR008948">
    <property type="entry name" value="L-Aspartase-like"/>
</dbReference>
<dbReference type="NCBIfam" id="TIGR00838">
    <property type="entry name" value="argH"/>
    <property type="match status" value="1"/>
</dbReference>
<dbReference type="PANTHER" id="PTHR43814">
    <property type="entry name" value="ARGININOSUCCINATE LYASE"/>
    <property type="match status" value="1"/>
</dbReference>
<dbReference type="PANTHER" id="PTHR43814:SF1">
    <property type="entry name" value="ARGININOSUCCINATE LYASE"/>
    <property type="match status" value="1"/>
</dbReference>
<dbReference type="Pfam" id="PF14698">
    <property type="entry name" value="ASL_C2"/>
    <property type="match status" value="1"/>
</dbReference>
<dbReference type="Pfam" id="PF00206">
    <property type="entry name" value="Lyase_1"/>
    <property type="match status" value="1"/>
</dbReference>
<dbReference type="PRINTS" id="PR00145">
    <property type="entry name" value="ARGSUCLYASE"/>
</dbReference>
<dbReference type="PRINTS" id="PR00149">
    <property type="entry name" value="FUMRATELYASE"/>
</dbReference>
<dbReference type="SUPFAM" id="SSF48557">
    <property type="entry name" value="L-aspartase-like"/>
    <property type="match status" value="1"/>
</dbReference>
<dbReference type="PROSITE" id="PS00163">
    <property type="entry name" value="FUMARATE_LYASES"/>
    <property type="match status" value="1"/>
</dbReference>
<feature type="chain" id="PRO_1000057047" description="Argininosuccinate lyase">
    <location>
        <begin position="1"/>
        <end position="457"/>
    </location>
</feature>
<sequence>MKKLWGGRFQKTPEKWVDEFGASIHFDKQLVKEDLTGSLAHASMLNTCGILDDEEAATIKDGLNKLMKKAEADELEFSVDYEDIHLNLEKMLIDEIGPLGGKLHTARSRNDQVATDMHLYLNNQVEHIIELISSFQTVLVEKAEQHVETIFPGYTHLQRAQPISFAHHMLAYFWMLERDKARFQDSLKRINVSPLGCGALAGTTFPIDREYTAELLGFDHIYENSLDGVSDRDFILEFLSNSSLVMMHLSRLCEEIILWCSQEFKFIELDDTYATGSSMMPQKKNPDMAELIRGKTGRVYGNLMGLLTIMKGLPLTYNKDLQEDKEGMFDTVKTIAGSLQIFTGMIQTMTVNEDVMKKATKEDFSNATEVADYLAKKGMPFREAHEIVGKLVYTCIQEGIYLSDLPFETFTEASDLFEEDIYTVLDPYVAVEKRTSAGGTGFKQIQLALEKAKACLA</sequence>